<feature type="peptide" id="PRO_0000044195" description="U1-poneritoxin-Ng1b" evidence="2">
    <location>
        <begin position="1"/>
        <end position="25"/>
    </location>
</feature>
<comment type="function">
    <text evidence="1">Has a broad spectrum of activity against both Gram-positive and Gram-negative bacteria and S.cerevisiae. Has insecticidal and hemolytic activities. May act by disrupting the integrity of the bacterial cell membrane.</text>
</comment>
<comment type="subcellular location">
    <subcellularLocation>
        <location evidence="2">Secreted</location>
    </subcellularLocation>
    <subcellularLocation>
        <location evidence="5">Target cell membrane</location>
    </subcellularLocation>
</comment>
<comment type="tissue specificity">
    <text evidence="6">Expressed by the venom gland.</text>
</comment>
<comment type="mass spectrometry"/>
<comment type="similarity">
    <text evidence="5">Belongs to the non-disulfide-bridged peptide (NDBP) superfamily. Medium-length antimicrobial peptide (group 3) family. Ponericin-W subfamily.</text>
</comment>
<proteinExistence type="evidence at protein level"/>
<dbReference type="GO" id="GO:0005576">
    <property type="term" value="C:extracellular region"/>
    <property type="evidence" value="ECO:0007669"/>
    <property type="project" value="UniProtKB-SubCell"/>
</dbReference>
<dbReference type="GO" id="GO:0016020">
    <property type="term" value="C:membrane"/>
    <property type="evidence" value="ECO:0007669"/>
    <property type="project" value="UniProtKB-KW"/>
</dbReference>
<dbReference type="GO" id="GO:0044218">
    <property type="term" value="C:other organism cell membrane"/>
    <property type="evidence" value="ECO:0007669"/>
    <property type="project" value="UniProtKB-KW"/>
</dbReference>
<dbReference type="GO" id="GO:0090729">
    <property type="term" value="F:toxin activity"/>
    <property type="evidence" value="ECO:0007669"/>
    <property type="project" value="UniProtKB-KW"/>
</dbReference>
<dbReference type="GO" id="GO:0042742">
    <property type="term" value="P:defense response to bacterium"/>
    <property type="evidence" value="ECO:0007669"/>
    <property type="project" value="UniProtKB-KW"/>
</dbReference>
<dbReference type="GO" id="GO:0050832">
    <property type="term" value="P:defense response to fungus"/>
    <property type="evidence" value="ECO:0007669"/>
    <property type="project" value="UniProtKB-KW"/>
</dbReference>
<dbReference type="GO" id="GO:0031640">
    <property type="term" value="P:killing of cells of another organism"/>
    <property type="evidence" value="ECO:0007669"/>
    <property type="project" value="UniProtKB-KW"/>
</dbReference>
<dbReference type="InterPro" id="IPR012523">
    <property type="entry name" value="Antimicrobial_4"/>
</dbReference>
<dbReference type="Pfam" id="PF08024">
    <property type="entry name" value="Antimicrobial_4"/>
    <property type="match status" value="1"/>
</dbReference>
<name>WTX1B_NEOGO</name>
<evidence type="ECO:0000250" key="1">
    <source>
        <dbReference type="UniProtKB" id="P82423"/>
    </source>
</evidence>
<evidence type="ECO:0000269" key="2">
    <source>
    </source>
</evidence>
<evidence type="ECO:0000303" key="3">
    <source>
    </source>
</evidence>
<evidence type="ECO:0000303" key="4">
    <source>
    </source>
</evidence>
<evidence type="ECO:0000305" key="5"/>
<evidence type="ECO:0000305" key="6">
    <source>
    </source>
</evidence>
<sequence>WLGSALKIGAKLLPSVVGLFQKKKK</sequence>
<protein>
    <recommendedName>
        <fullName evidence="4">U1-poneritoxin-Ng1b</fullName>
        <shortName evidence="4">U1-PONTX-Ng1b</shortName>
    </recommendedName>
    <alternativeName>
        <fullName evidence="5">Poneratoxin</fullName>
    </alternativeName>
    <alternativeName>
        <fullName evidence="3">Ponericin-W2</fullName>
    </alternativeName>
</protein>
<organism>
    <name type="scientific">Neoponera goeldii</name>
    <name type="common">Ponerine ant</name>
    <name type="synonym">Pachycondyla goeldii</name>
    <dbReference type="NCBI Taxonomy" id="3057131"/>
    <lineage>
        <taxon>Eukaryota</taxon>
        <taxon>Metazoa</taxon>
        <taxon>Ecdysozoa</taxon>
        <taxon>Arthropoda</taxon>
        <taxon>Hexapoda</taxon>
        <taxon>Insecta</taxon>
        <taxon>Pterygota</taxon>
        <taxon>Neoptera</taxon>
        <taxon>Endopterygota</taxon>
        <taxon>Hymenoptera</taxon>
        <taxon>Apocrita</taxon>
        <taxon>Aculeata</taxon>
        <taxon>Formicoidea</taxon>
        <taxon>Formicidae</taxon>
        <taxon>Ponerinae</taxon>
        <taxon>Ponerini</taxon>
        <taxon>Neoponera</taxon>
    </lineage>
</organism>
<keyword id="KW-0044">Antibiotic</keyword>
<keyword id="KW-0929">Antimicrobial</keyword>
<keyword id="KW-0204">Cytolysis</keyword>
<keyword id="KW-0903">Direct protein sequencing</keyword>
<keyword id="KW-0295">Fungicide</keyword>
<keyword id="KW-0354">Hemolysis</keyword>
<keyword id="KW-0472">Membrane</keyword>
<keyword id="KW-0964">Secreted</keyword>
<keyword id="KW-1052">Target cell membrane</keyword>
<keyword id="KW-1053">Target membrane</keyword>
<keyword id="KW-0800">Toxin</keyword>
<accession>P82424</accession>
<reference key="1">
    <citation type="journal article" date="2001" name="J. Biol. Chem.">
        <title>Ponericins, new antibacterial and insecticidal peptides from the venom of the ant Pachycondyla goeldii.</title>
        <authorList>
            <person name="Orivel J."/>
            <person name="Redeker V."/>
            <person name="Le Caer J.-P."/>
            <person name="Krier F."/>
            <person name="Revol-Junelles A.-M."/>
            <person name="Longeon A."/>
            <person name="Chafotte A."/>
            <person name="Dejean A."/>
            <person name="Rossier J."/>
        </authorList>
    </citation>
    <scope>PROTEIN SEQUENCE</scope>
    <scope>SUBCELLULAR LOCATION</scope>
    <scope>MASS SPECTROMETRY</scope>
    <source>
        <tissue>Venom</tissue>
    </source>
</reference>
<reference key="2">
    <citation type="journal article" date="2016" name="Toxins">
        <title>The biochemical toxin arsenal from ant venoms.</title>
        <authorList>
            <person name="Touchard A."/>
            <person name="Aili S.R."/>
            <person name="Fox E.G."/>
            <person name="Escoubas P."/>
            <person name="Orivel J."/>
            <person name="Nicholson G.M."/>
            <person name="Dejean A."/>
        </authorList>
    </citation>
    <scope>REVIEW</scope>
    <scope>NOMENCLATURE</scope>
</reference>